<proteinExistence type="inferred from homology"/>
<gene>
    <name evidence="1" type="primary">rpmB</name>
    <name type="ordered locus">Shewmr4_3596</name>
</gene>
<accession>Q0HE57</accession>
<organism>
    <name type="scientific">Shewanella sp. (strain MR-4)</name>
    <dbReference type="NCBI Taxonomy" id="60480"/>
    <lineage>
        <taxon>Bacteria</taxon>
        <taxon>Pseudomonadati</taxon>
        <taxon>Pseudomonadota</taxon>
        <taxon>Gammaproteobacteria</taxon>
        <taxon>Alteromonadales</taxon>
        <taxon>Shewanellaceae</taxon>
        <taxon>Shewanella</taxon>
    </lineage>
</organism>
<feature type="chain" id="PRO_1000007352" description="Large ribosomal subunit protein bL28">
    <location>
        <begin position="1"/>
        <end position="78"/>
    </location>
</feature>
<feature type="region of interest" description="Disordered" evidence="2">
    <location>
        <begin position="1"/>
        <end position="21"/>
    </location>
</feature>
<protein>
    <recommendedName>
        <fullName evidence="1">Large ribosomal subunit protein bL28</fullName>
    </recommendedName>
    <alternativeName>
        <fullName evidence="3">50S ribosomal protein L28</fullName>
    </alternativeName>
</protein>
<dbReference type="EMBL" id="CP000446">
    <property type="protein sequence ID" value="ABI40660.1"/>
    <property type="molecule type" value="Genomic_DNA"/>
</dbReference>
<dbReference type="RefSeq" id="WP_006079870.1">
    <property type="nucleotide sequence ID" value="NC_008321.1"/>
</dbReference>
<dbReference type="SMR" id="Q0HE57"/>
<dbReference type="GeneID" id="94729700"/>
<dbReference type="KEGG" id="she:Shewmr4_3596"/>
<dbReference type="HOGENOM" id="CLU_064548_3_1_6"/>
<dbReference type="GO" id="GO:0022625">
    <property type="term" value="C:cytosolic large ribosomal subunit"/>
    <property type="evidence" value="ECO:0007669"/>
    <property type="project" value="TreeGrafter"/>
</dbReference>
<dbReference type="GO" id="GO:0003735">
    <property type="term" value="F:structural constituent of ribosome"/>
    <property type="evidence" value="ECO:0007669"/>
    <property type="project" value="InterPro"/>
</dbReference>
<dbReference type="GO" id="GO:0006412">
    <property type="term" value="P:translation"/>
    <property type="evidence" value="ECO:0007669"/>
    <property type="project" value="UniProtKB-UniRule"/>
</dbReference>
<dbReference type="FunFam" id="2.30.170.40:FF:000001">
    <property type="entry name" value="50S ribosomal protein L28"/>
    <property type="match status" value="1"/>
</dbReference>
<dbReference type="Gene3D" id="2.30.170.40">
    <property type="entry name" value="Ribosomal protein L28/L24"/>
    <property type="match status" value="1"/>
</dbReference>
<dbReference type="HAMAP" id="MF_00373">
    <property type="entry name" value="Ribosomal_bL28"/>
    <property type="match status" value="1"/>
</dbReference>
<dbReference type="InterPro" id="IPR026569">
    <property type="entry name" value="Ribosomal_bL28"/>
</dbReference>
<dbReference type="InterPro" id="IPR034704">
    <property type="entry name" value="Ribosomal_bL28/bL31-like_sf"/>
</dbReference>
<dbReference type="InterPro" id="IPR001383">
    <property type="entry name" value="Ribosomal_bL28_bact-type"/>
</dbReference>
<dbReference type="InterPro" id="IPR037147">
    <property type="entry name" value="Ribosomal_bL28_sf"/>
</dbReference>
<dbReference type="NCBIfam" id="TIGR00009">
    <property type="entry name" value="L28"/>
    <property type="match status" value="1"/>
</dbReference>
<dbReference type="PANTHER" id="PTHR13528">
    <property type="entry name" value="39S RIBOSOMAL PROTEIN L28, MITOCHONDRIAL"/>
    <property type="match status" value="1"/>
</dbReference>
<dbReference type="PANTHER" id="PTHR13528:SF2">
    <property type="entry name" value="LARGE RIBOSOMAL SUBUNIT PROTEIN BL28M"/>
    <property type="match status" value="1"/>
</dbReference>
<dbReference type="Pfam" id="PF00830">
    <property type="entry name" value="Ribosomal_L28"/>
    <property type="match status" value="1"/>
</dbReference>
<dbReference type="SUPFAM" id="SSF143800">
    <property type="entry name" value="L28p-like"/>
    <property type="match status" value="1"/>
</dbReference>
<keyword id="KW-0687">Ribonucleoprotein</keyword>
<keyword id="KW-0689">Ribosomal protein</keyword>
<sequence>MSRVCQVTGKKPMVGNNRSHAKNATRRRFLPNLQNHRFWLEEEKRFVQLRVSTKGIRLIDKKGIEVVVAELRARGEKV</sequence>
<evidence type="ECO:0000255" key="1">
    <source>
        <dbReference type="HAMAP-Rule" id="MF_00373"/>
    </source>
</evidence>
<evidence type="ECO:0000256" key="2">
    <source>
        <dbReference type="SAM" id="MobiDB-lite"/>
    </source>
</evidence>
<evidence type="ECO:0000305" key="3"/>
<comment type="similarity">
    <text evidence="1">Belongs to the bacterial ribosomal protein bL28 family.</text>
</comment>
<reference key="1">
    <citation type="submission" date="2006-08" db="EMBL/GenBank/DDBJ databases">
        <title>Complete sequence of Shewanella sp. MR-4.</title>
        <authorList>
            <consortium name="US DOE Joint Genome Institute"/>
            <person name="Copeland A."/>
            <person name="Lucas S."/>
            <person name="Lapidus A."/>
            <person name="Barry K."/>
            <person name="Detter J.C."/>
            <person name="Glavina del Rio T."/>
            <person name="Hammon N."/>
            <person name="Israni S."/>
            <person name="Dalin E."/>
            <person name="Tice H."/>
            <person name="Pitluck S."/>
            <person name="Kiss H."/>
            <person name="Brettin T."/>
            <person name="Bruce D."/>
            <person name="Han C."/>
            <person name="Tapia R."/>
            <person name="Gilna P."/>
            <person name="Schmutz J."/>
            <person name="Larimer F."/>
            <person name="Land M."/>
            <person name="Hauser L."/>
            <person name="Kyrpides N."/>
            <person name="Mikhailova N."/>
            <person name="Nealson K."/>
            <person name="Konstantinidis K."/>
            <person name="Klappenbach J."/>
            <person name="Tiedje J."/>
            <person name="Richardson P."/>
        </authorList>
    </citation>
    <scope>NUCLEOTIDE SEQUENCE [LARGE SCALE GENOMIC DNA]</scope>
    <source>
        <strain>MR-4</strain>
    </source>
</reference>
<name>RL28_SHESM</name>